<organism>
    <name type="scientific">Xenopus laevis</name>
    <name type="common">African clawed frog</name>
    <dbReference type="NCBI Taxonomy" id="8355"/>
    <lineage>
        <taxon>Eukaryota</taxon>
        <taxon>Metazoa</taxon>
        <taxon>Chordata</taxon>
        <taxon>Craniata</taxon>
        <taxon>Vertebrata</taxon>
        <taxon>Euteleostomi</taxon>
        <taxon>Amphibia</taxon>
        <taxon>Batrachia</taxon>
        <taxon>Anura</taxon>
        <taxon>Pipoidea</taxon>
        <taxon>Pipidae</taxon>
        <taxon>Xenopodinae</taxon>
        <taxon>Xenopus</taxon>
        <taxon>Xenopus</taxon>
    </lineage>
</organism>
<accession>P63282</accession>
<accession>P50550</accession>
<accession>Q15698</accession>
<accession>Q5D0B2</accession>
<accession>Q86VB3</accession>
<reference key="1">
    <citation type="journal article" date="1997" name="Proc. Natl. Acad. Sci. U.S.A.">
        <title>RanBP2 associates with Ubc9p and a modified form of RanGAP1.</title>
        <authorList>
            <person name="Saitoh H."/>
            <person name="Pu R."/>
            <person name="Cavenagh M."/>
            <person name="Dasso M."/>
        </authorList>
    </citation>
    <scope>NUCLEOTIDE SEQUENCE [MRNA]</scope>
    <scope>PROTEIN SEQUENCE OF 19-28 AND 60-64</scope>
    <scope>INTERACTION WITH RANBP2 AND RANGAP1</scope>
    <source>
        <tissue>Oocyte</tissue>
    </source>
</reference>
<reference key="2">
    <citation type="submission" date="2003-01" db="EMBL/GenBank/DDBJ databases">
        <authorList>
            <consortium name="NIH - Xenopus Gene Collection (XGC) project"/>
        </authorList>
    </citation>
    <scope>NUCLEOTIDE SEQUENCE [LARGE SCALE MRNA]</scope>
    <source>
        <tissue>Embryo</tissue>
    </source>
</reference>
<reference key="3">
    <citation type="journal article" date="1998" name="Curr. Biol.">
        <title>Ubc9p and the conjugation of SUMO-1 to RanGAP1 and RanBP2.</title>
        <authorList>
            <person name="Saitoh H."/>
            <person name="Sparrow D.B."/>
            <person name="Shiomi T."/>
            <person name="Pu R.T."/>
            <person name="Nishimoto T."/>
            <person name="Mohun T.J."/>
            <person name="Dasso M."/>
        </authorList>
    </citation>
    <scope>FUNCTION</scope>
    <scope>MUTAGENESIS OF CYS-93</scope>
</reference>
<reference key="4">
    <citation type="journal article" date="2003" name="J. Cell Biol.">
        <title>SUMO-2/3 regulates topoisomerase II in mitosis.</title>
        <authorList>
            <person name="Azuma Y."/>
            <person name="Arnaoutov A."/>
            <person name="Dasso M."/>
        </authorList>
    </citation>
    <scope>FUNCTION</scope>
</reference>
<reference key="5">
    <citation type="journal article" date="2005" name="Dev. Cell">
        <title>SoxE factors function equivalently during neural crest and inner ear development and their activity is regulated by SUMOylation.</title>
        <authorList>
            <person name="Taylor K.M."/>
            <person name="Labonne C."/>
        </authorList>
    </citation>
    <scope>INTERACTION WITH SOX9 AND SOX10</scope>
</reference>
<protein>
    <recommendedName>
        <fullName>SUMO-conjugating enzyme UBC9</fullName>
        <ecNumber>2.3.2.-</ecNumber>
    </recommendedName>
    <alternativeName>
        <fullName>RING-type E3 SUMO transferase UBC9</fullName>
    </alternativeName>
    <alternativeName>
        <fullName>SUMO-protein ligase</fullName>
    </alternativeName>
    <alternativeName>
        <fullName>Ubiquitin carrier protein 9</fullName>
    </alternativeName>
    <alternativeName>
        <fullName>Ubiquitin carrier protein I</fullName>
    </alternativeName>
    <alternativeName>
        <fullName>Ubiquitin-conjugating enzyme E2 I</fullName>
    </alternativeName>
    <alternativeName>
        <fullName>Ubiquitin-protein ligase I</fullName>
    </alternativeName>
</protein>
<feature type="chain" id="PRO_0000082458" description="SUMO-conjugating enzyme UBC9">
    <location>
        <begin position="1"/>
        <end position="158"/>
    </location>
</feature>
<feature type="domain" description="UBC core" evidence="2">
    <location>
        <begin position="4"/>
        <end position="157"/>
    </location>
</feature>
<feature type="region of interest" description="Interaction with sumo1" evidence="1">
    <location>
        <begin position="13"/>
        <end position="18"/>
    </location>
</feature>
<feature type="active site" description="Glycyl thioester intermediate" evidence="2">
    <location>
        <position position="93"/>
    </location>
</feature>
<feature type="site" description="Interaction with ranbp2" evidence="1">
    <location>
        <position position="4"/>
    </location>
</feature>
<feature type="site" description="Interaction with ranbp2" evidence="1">
    <location>
        <position position="25"/>
    </location>
</feature>
<feature type="site" description="Interaction with ranbp2" evidence="1">
    <location>
        <position position="57"/>
    </location>
</feature>
<feature type="site" description="Substrate binding" evidence="1">
    <location>
        <begin position="100"/>
        <end position="101"/>
    </location>
</feature>
<feature type="mutagenesis site" description="Abolishes enzymatic activity." evidence="6">
    <original>C</original>
    <variation>A</variation>
    <location>
        <position position="93"/>
    </location>
</feature>
<gene>
    <name type="primary">ube2i</name>
    <name type="synonym">ubc9</name>
    <name type="synonym">ubce9</name>
</gene>
<comment type="function">
    <text evidence="3 6">Accepts the ubiquitin-like proteins sumo1, sumo2 and sumo3 from the uble1a-uble1b E1 complex and catalyzes their covalent attachment to other proteins with the help of an E3 ligase such as ranbp2 or cbx4. Essential for nuclear architecture and chromosome segregation.</text>
</comment>
<comment type="pathway">
    <text>Protein modification; protein sumoylation.</text>
</comment>
<comment type="subunit">
    <text evidence="4 5">Forms a tight complex with rangap1 and ranbp2. Interacts with sox9 and sox10.</text>
</comment>
<comment type="subcellular location">
    <subcellularLocation>
        <location evidence="7">Nucleus</location>
    </subcellularLocation>
</comment>
<comment type="similarity">
    <text evidence="2">Belongs to the ubiquitin-conjugating enzyme family.</text>
</comment>
<evidence type="ECO:0000250" key="1"/>
<evidence type="ECO:0000255" key="2">
    <source>
        <dbReference type="PROSITE-ProRule" id="PRU00388"/>
    </source>
</evidence>
<evidence type="ECO:0000269" key="3">
    <source>
    </source>
</evidence>
<evidence type="ECO:0000269" key="4">
    <source>
    </source>
</evidence>
<evidence type="ECO:0000269" key="5">
    <source>
    </source>
</evidence>
<evidence type="ECO:0000269" key="6">
    <source>
    </source>
</evidence>
<evidence type="ECO:0000305" key="7"/>
<dbReference type="EC" id="2.3.2.-"/>
<dbReference type="EMBL" id="U88561">
    <property type="protein sequence ID" value="AAB57736.1"/>
    <property type="molecule type" value="mRNA"/>
</dbReference>
<dbReference type="EMBL" id="BC046273">
    <property type="protein sequence ID" value="AAH46273.1"/>
    <property type="molecule type" value="mRNA"/>
</dbReference>
<dbReference type="RefSeq" id="NP_001080758.1">
    <property type="nucleotide sequence ID" value="NM_001087289.1"/>
</dbReference>
<dbReference type="BMRB" id="P63282"/>
<dbReference type="SMR" id="P63282"/>
<dbReference type="BioGRID" id="98692">
    <property type="interactions" value="4"/>
</dbReference>
<dbReference type="DNASU" id="380450"/>
<dbReference type="GeneID" id="108703134"/>
<dbReference type="GeneID" id="380450"/>
<dbReference type="KEGG" id="xla:108703134"/>
<dbReference type="KEGG" id="xla:380450"/>
<dbReference type="AGR" id="Xenbase:XB-GENE-974023"/>
<dbReference type="CTD" id="108703134"/>
<dbReference type="CTD" id="380450"/>
<dbReference type="Xenbase" id="XB-GENE-974023">
    <property type="gene designation" value="ube2i.L"/>
</dbReference>
<dbReference type="OrthoDB" id="6600758at2759"/>
<dbReference type="UniPathway" id="UPA00886"/>
<dbReference type="CD-CODE" id="78E86D56">
    <property type="entry name" value="Mitochondrial cloud"/>
</dbReference>
<dbReference type="Proteomes" id="UP000186698">
    <property type="component" value="Chromosome 9_10L"/>
</dbReference>
<dbReference type="Proteomes" id="UP000186698">
    <property type="component" value="Chromosome 9_10S"/>
</dbReference>
<dbReference type="Bgee" id="108703134">
    <property type="expression patterns" value="Expressed in egg cell and 19 other cell types or tissues"/>
</dbReference>
<dbReference type="GO" id="GO:0005634">
    <property type="term" value="C:nucleus"/>
    <property type="evidence" value="ECO:0000318"/>
    <property type="project" value="GO_Central"/>
</dbReference>
<dbReference type="GO" id="GO:0005524">
    <property type="term" value="F:ATP binding"/>
    <property type="evidence" value="ECO:0007669"/>
    <property type="project" value="UniProtKB-KW"/>
</dbReference>
<dbReference type="GO" id="GO:0061656">
    <property type="term" value="F:SUMO conjugating enzyme activity"/>
    <property type="evidence" value="ECO:0000318"/>
    <property type="project" value="GO_Central"/>
</dbReference>
<dbReference type="GO" id="GO:0051301">
    <property type="term" value="P:cell division"/>
    <property type="evidence" value="ECO:0007669"/>
    <property type="project" value="UniProtKB-KW"/>
</dbReference>
<dbReference type="GO" id="GO:0007059">
    <property type="term" value="P:chromosome segregation"/>
    <property type="evidence" value="ECO:0007669"/>
    <property type="project" value="UniProtKB-KW"/>
</dbReference>
<dbReference type="GO" id="GO:0016925">
    <property type="term" value="P:protein sumoylation"/>
    <property type="evidence" value="ECO:0000318"/>
    <property type="project" value="GO_Central"/>
</dbReference>
<dbReference type="CDD" id="cd23798">
    <property type="entry name" value="UBCc_UBE2I"/>
    <property type="match status" value="1"/>
</dbReference>
<dbReference type="FunFam" id="3.10.110.10:FF:000013">
    <property type="entry name" value="SUMO-conjugating enzyme UBC9"/>
    <property type="match status" value="1"/>
</dbReference>
<dbReference type="Gene3D" id="3.10.110.10">
    <property type="entry name" value="Ubiquitin Conjugating Enzyme"/>
    <property type="match status" value="1"/>
</dbReference>
<dbReference type="InterPro" id="IPR050113">
    <property type="entry name" value="Ub_conjugating_enzyme"/>
</dbReference>
<dbReference type="InterPro" id="IPR000608">
    <property type="entry name" value="UBQ-conjugat_E2_core"/>
</dbReference>
<dbReference type="InterPro" id="IPR023313">
    <property type="entry name" value="UBQ-conjugating_AS"/>
</dbReference>
<dbReference type="InterPro" id="IPR016135">
    <property type="entry name" value="UBQ-conjugating_enzyme/RWD"/>
</dbReference>
<dbReference type="PANTHER" id="PTHR24067">
    <property type="entry name" value="UBIQUITIN-CONJUGATING ENZYME E2"/>
    <property type="match status" value="1"/>
</dbReference>
<dbReference type="Pfam" id="PF00179">
    <property type="entry name" value="UQ_con"/>
    <property type="match status" value="1"/>
</dbReference>
<dbReference type="SMART" id="SM00212">
    <property type="entry name" value="UBCc"/>
    <property type="match status" value="1"/>
</dbReference>
<dbReference type="SUPFAM" id="SSF54495">
    <property type="entry name" value="UBC-like"/>
    <property type="match status" value="1"/>
</dbReference>
<dbReference type="PROSITE" id="PS00183">
    <property type="entry name" value="UBC_1"/>
    <property type="match status" value="1"/>
</dbReference>
<dbReference type="PROSITE" id="PS50127">
    <property type="entry name" value="UBC_2"/>
    <property type="match status" value="1"/>
</dbReference>
<proteinExistence type="evidence at protein level"/>
<sequence>MSGIALSRLAQERKAWRKDHPFGFVAVPTKNPDGTMNLMNWECAIPGKKGTPWEGGLFKLRMLFKDDYPSSPPKCKFEPPLFHPNVYPSGTVCLSILEEDKDWRPAITIKQILLGIQELLNEPNIQDPAQAEAYTIYCQNRVEYEKRVRAQAKKFAPS</sequence>
<keyword id="KW-0067">ATP-binding</keyword>
<keyword id="KW-0131">Cell cycle</keyword>
<keyword id="KW-0132">Cell division</keyword>
<keyword id="KW-0159">Chromosome partition</keyword>
<keyword id="KW-0903">Direct protein sequencing</keyword>
<keyword id="KW-0498">Mitosis</keyword>
<keyword id="KW-0547">Nucleotide-binding</keyword>
<keyword id="KW-0539">Nucleus</keyword>
<keyword id="KW-1185">Reference proteome</keyword>
<keyword id="KW-0808">Transferase</keyword>
<keyword id="KW-0833">Ubl conjugation pathway</keyword>
<name>UBC9_XENLA</name>